<feature type="chain" id="PRO_1000024163" description="Dihydroorotate dehydrogenase (quinone)">
    <location>
        <begin position="1"/>
        <end position="342"/>
    </location>
</feature>
<feature type="active site" description="Nucleophile" evidence="1">
    <location>
        <position position="178"/>
    </location>
</feature>
<feature type="binding site" evidence="1">
    <location>
        <begin position="65"/>
        <end position="69"/>
    </location>
    <ligand>
        <name>FMN</name>
        <dbReference type="ChEBI" id="CHEBI:58210"/>
    </ligand>
</feature>
<feature type="binding site" evidence="1">
    <location>
        <position position="69"/>
    </location>
    <ligand>
        <name>substrate</name>
    </ligand>
</feature>
<feature type="binding site" evidence="1">
    <location>
        <position position="89"/>
    </location>
    <ligand>
        <name>FMN</name>
        <dbReference type="ChEBI" id="CHEBI:58210"/>
    </ligand>
</feature>
<feature type="binding site" evidence="1">
    <location>
        <begin position="114"/>
        <end position="118"/>
    </location>
    <ligand>
        <name>substrate</name>
    </ligand>
</feature>
<feature type="binding site" evidence="1">
    <location>
        <position position="142"/>
    </location>
    <ligand>
        <name>FMN</name>
        <dbReference type="ChEBI" id="CHEBI:58210"/>
    </ligand>
</feature>
<feature type="binding site" evidence="1">
    <location>
        <position position="175"/>
    </location>
    <ligand>
        <name>FMN</name>
        <dbReference type="ChEBI" id="CHEBI:58210"/>
    </ligand>
</feature>
<feature type="binding site" evidence="1">
    <location>
        <position position="175"/>
    </location>
    <ligand>
        <name>substrate</name>
    </ligand>
</feature>
<feature type="binding site" evidence="1">
    <location>
        <position position="180"/>
    </location>
    <ligand>
        <name>substrate</name>
    </ligand>
</feature>
<feature type="binding site" evidence="1">
    <location>
        <position position="220"/>
    </location>
    <ligand>
        <name>FMN</name>
        <dbReference type="ChEBI" id="CHEBI:58210"/>
    </ligand>
</feature>
<feature type="binding site" evidence="1">
    <location>
        <position position="248"/>
    </location>
    <ligand>
        <name>FMN</name>
        <dbReference type="ChEBI" id="CHEBI:58210"/>
    </ligand>
</feature>
<feature type="binding site" evidence="1">
    <location>
        <begin position="249"/>
        <end position="250"/>
    </location>
    <ligand>
        <name>substrate</name>
    </ligand>
</feature>
<feature type="binding site" evidence="1">
    <location>
        <position position="271"/>
    </location>
    <ligand>
        <name>FMN</name>
        <dbReference type="ChEBI" id="CHEBI:58210"/>
    </ligand>
</feature>
<feature type="binding site" evidence="1">
    <location>
        <position position="300"/>
    </location>
    <ligand>
        <name>FMN</name>
        <dbReference type="ChEBI" id="CHEBI:58210"/>
    </ligand>
</feature>
<feature type="binding site" evidence="1">
    <location>
        <begin position="321"/>
        <end position="322"/>
    </location>
    <ligand>
        <name>FMN</name>
        <dbReference type="ChEBI" id="CHEBI:58210"/>
    </ligand>
</feature>
<keyword id="KW-1003">Cell membrane</keyword>
<keyword id="KW-0285">Flavoprotein</keyword>
<keyword id="KW-0288">FMN</keyword>
<keyword id="KW-0472">Membrane</keyword>
<keyword id="KW-0560">Oxidoreductase</keyword>
<keyword id="KW-0665">Pyrimidine biosynthesis</keyword>
<comment type="function">
    <text evidence="1">Catalyzes the conversion of dihydroorotate to orotate with quinone as electron acceptor.</text>
</comment>
<comment type="catalytic activity">
    <reaction evidence="1">
        <text>(S)-dihydroorotate + a quinone = orotate + a quinol</text>
        <dbReference type="Rhea" id="RHEA:30187"/>
        <dbReference type="ChEBI" id="CHEBI:24646"/>
        <dbReference type="ChEBI" id="CHEBI:30839"/>
        <dbReference type="ChEBI" id="CHEBI:30864"/>
        <dbReference type="ChEBI" id="CHEBI:132124"/>
        <dbReference type="EC" id="1.3.5.2"/>
    </reaction>
</comment>
<comment type="cofactor">
    <cofactor evidence="1">
        <name>FMN</name>
        <dbReference type="ChEBI" id="CHEBI:58210"/>
    </cofactor>
    <text evidence="1">Binds 1 FMN per subunit.</text>
</comment>
<comment type="pathway">
    <text evidence="1">Pyrimidine metabolism; UMP biosynthesis via de novo pathway; orotate from (S)-dihydroorotate (quinone route): step 1/1.</text>
</comment>
<comment type="subunit">
    <text evidence="1">Monomer.</text>
</comment>
<comment type="subcellular location">
    <subcellularLocation>
        <location evidence="1">Cell membrane</location>
        <topology evidence="1">Peripheral membrane protein</topology>
    </subcellularLocation>
</comment>
<comment type="similarity">
    <text evidence="1">Belongs to the dihydroorotate dehydrogenase family. Type 2 subfamily.</text>
</comment>
<sequence length="342" mass="36305">MFSSLYPLARASLFKMDAEDAHHLTLRMLGAAGRTGLACALSPRVPDAPRTVMGLSFRNPVGLAAGLDKDGAAIDGFAALGFGFIEVGTVTPRAQPGNPRPRLFRLPEADAIINRMGFNNSGVDQFVKNVQAARYRGVLGLNIGKNADTPIERAADDYLYCLERVYPFASYVTINISSPNTKNLRQLQGAGELDALLAALKDKQRRLADLHGKLVPLALKIAPDLDDEQVKEIAATLLRHDIEGVIATNTTLSREAVKGLPHADEAGGLSGRPVFDASNAVIRKLRAELGDAVPIIGVGGIFSGEDARAKLAAGAALVQLYTGFIYRGPALVAECVKAIARG</sequence>
<organism>
    <name type="scientific">Burkholderia pseudomallei (strain 668)</name>
    <dbReference type="NCBI Taxonomy" id="320373"/>
    <lineage>
        <taxon>Bacteria</taxon>
        <taxon>Pseudomonadati</taxon>
        <taxon>Pseudomonadota</taxon>
        <taxon>Betaproteobacteria</taxon>
        <taxon>Burkholderiales</taxon>
        <taxon>Burkholderiaceae</taxon>
        <taxon>Burkholderia</taxon>
        <taxon>pseudomallei group</taxon>
    </lineage>
</organism>
<proteinExistence type="inferred from homology"/>
<protein>
    <recommendedName>
        <fullName evidence="1">Dihydroorotate dehydrogenase (quinone)</fullName>
        <ecNumber evidence="1">1.3.5.2</ecNumber>
    </recommendedName>
    <alternativeName>
        <fullName evidence="1">DHOdehase</fullName>
        <shortName evidence="1">DHOD</shortName>
        <shortName evidence="1">DHODase</shortName>
    </alternativeName>
    <alternativeName>
        <fullName evidence="1">Dihydroorotate oxidase</fullName>
    </alternativeName>
</protein>
<dbReference type="EC" id="1.3.5.2" evidence="1"/>
<dbReference type="EMBL" id="CP000570">
    <property type="protein sequence ID" value="ABN82176.1"/>
    <property type="molecule type" value="Genomic_DNA"/>
</dbReference>
<dbReference type="RefSeq" id="WP_011851553.1">
    <property type="nucleotide sequence ID" value="NC_009074.1"/>
</dbReference>
<dbReference type="SMR" id="A3N925"/>
<dbReference type="KEGG" id="bpd:BURPS668_1809"/>
<dbReference type="HOGENOM" id="CLU_013640_2_0_4"/>
<dbReference type="UniPathway" id="UPA00070">
    <property type="reaction ID" value="UER00946"/>
</dbReference>
<dbReference type="GO" id="GO:0005737">
    <property type="term" value="C:cytoplasm"/>
    <property type="evidence" value="ECO:0007669"/>
    <property type="project" value="InterPro"/>
</dbReference>
<dbReference type="GO" id="GO:0005886">
    <property type="term" value="C:plasma membrane"/>
    <property type="evidence" value="ECO:0007669"/>
    <property type="project" value="UniProtKB-SubCell"/>
</dbReference>
<dbReference type="GO" id="GO:0106430">
    <property type="term" value="F:dihydroorotate dehydrogenase (quinone) activity"/>
    <property type="evidence" value="ECO:0007669"/>
    <property type="project" value="UniProtKB-EC"/>
</dbReference>
<dbReference type="GO" id="GO:0006207">
    <property type="term" value="P:'de novo' pyrimidine nucleobase biosynthetic process"/>
    <property type="evidence" value="ECO:0007669"/>
    <property type="project" value="InterPro"/>
</dbReference>
<dbReference type="GO" id="GO:0044205">
    <property type="term" value="P:'de novo' UMP biosynthetic process"/>
    <property type="evidence" value="ECO:0007669"/>
    <property type="project" value="UniProtKB-UniRule"/>
</dbReference>
<dbReference type="CDD" id="cd04738">
    <property type="entry name" value="DHOD_2_like"/>
    <property type="match status" value="1"/>
</dbReference>
<dbReference type="FunFam" id="3.20.20.70:FF:000028">
    <property type="entry name" value="Dihydroorotate dehydrogenase (quinone)"/>
    <property type="match status" value="1"/>
</dbReference>
<dbReference type="Gene3D" id="3.20.20.70">
    <property type="entry name" value="Aldolase class I"/>
    <property type="match status" value="1"/>
</dbReference>
<dbReference type="HAMAP" id="MF_00225">
    <property type="entry name" value="DHO_dh_type2"/>
    <property type="match status" value="1"/>
</dbReference>
<dbReference type="InterPro" id="IPR013785">
    <property type="entry name" value="Aldolase_TIM"/>
</dbReference>
<dbReference type="InterPro" id="IPR050074">
    <property type="entry name" value="DHO_dehydrogenase"/>
</dbReference>
<dbReference type="InterPro" id="IPR012135">
    <property type="entry name" value="Dihydroorotate_DH_1_2"/>
</dbReference>
<dbReference type="InterPro" id="IPR005719">
    <property type="entry name" value="Dihydroorotate_DH_2"/>
</dbReference>
<dbReference type="InterPro" id="IPR005720">
    <property type="entry name" value="Dihydroorotate_DH_cat"/>
</dbReference>
<dbReference type="InterPro" id="IPR001295">
    <property type="entry name" value="Dihydroorotate_DH_CS"/>
</dbReference>
<dbReference type="NCBIfam" id="NF003644">
    <property type="entry name" value="PRK05286.1-1"/>
    <property type="match status" value="1"/>
</dbReference>
<dbReference type="NCBIfam" id="NF003645">
    <property type="entry name" value="PRK05286.1-2"/>
    <property type="match status" value="1"/>
</dbReference>
<dbReference type="NCBIfam" id="NF003646">
    <property type="entry name" value="PRK05286.1-4"/>
    <property type="match status" value="1"/>
</dbReference>
<dbReference type="NCBIfam" id="NF003652">
    <property type="entry name" value="PRK05286.2-5"/>
    <property type="match status" value="1"/>
</dbReference>
<dbReference type="NCBIfam" id="TIGR01036">
    <property type="entry name" value="pyrD_sub2"/>
    <property type="match status" value="1"/>
</dbReference>
<dbReference type="PANTHER" id="PTHR48109:SF4">
    <property type="entry name" value="DIHYDROOROTATE DEHYDROGENASE (QUINONE), MITOCHONDRIAL"/>
    <property type="match status" value="1"/>
</dbReference>
<dbReference type="PANTHER" id="PTHR48109">
    <property type="entry name" value="DIHYDROOROTATE DEHYDROGENASE (QUINONE), MITOCHONDRIAL-RELATED"/>
    <property type="match status" value="1"/>
</dbReference>
<dbReference type="Pfam" id="PF01180">
    <property type="entry name" value="DHO_dh"/>
    <property type="match status" value="1"/>
</dbReference>
<dbReference type="PIRSF" id="PIRSF000164">
    <property type="entry name" value="DHO_oxidase"/>
    <property type="match status" value="1"/>
</dbReference>
<dbReference type="SUPFAM" id="SSF51395">
    <property type="entry name" value="FMN-linked oxidoreductases"/>
    <property type="match status" value="1"/>
</dbReference>
<dbReference type="PROSITE" id="PS00911">
    <property type="entry name" value="DHODEHASE_1"/>
    <property type="match status" value="1"/>
</dbReference>
<dbReference type="PROSITE" id="PS00912">
    <property type="entry name" value="DHODEHASE_2"/>
    <property type="match status" value="1"/>
</dbReference>
<name>PYRD_BURP6</name>
<evidence type="ECO:0000255" key="1">
    <source>
        <dbReference type="HAMAP-Rule" id="MF_00225"/>
    </source>
</evidence>
<reference key="1">
    <citation type="journal article" date="2010" name="Genome Biol. Evol.">
        <title>Continuing evolution of Burkholderia mallei through genome reduction and large-scale rearrangements.</title>
        <authorList>
            <person name="Losada L."/>
            <person name="Ronning C.M."/>
            <person name="DeShazer D."/>
            <person name="Woods D."/>
            <person name="Fedorova N."/>
            <person name="Kim H.S."/>
            <person name="Shabalina S.A."/>
            <person name="Pearson T.R."/>
            <person name="Brinkac L."/>
            <person name="Tan P."/>
            <person name="Nandi T."/>
            <person name="Crabtree J."/>
            <person name="Badger J."/>
            <person name="Beckstrom-Sternberg S."/>
            <person name="Saqib M."/>
            <person name="Schutzer S.E."/>
            <person name="Keim P."/>
            <person name="Nierman W.C."/>
        </authorList>
    </citation>
    <scope>NUCLEOTIDE SEQUENCE [LARGE SCALE GENOMIC DNA]</scope>
    <source>
        <strain>668</strain>
    </source>
</reference>
<accession>A3N925</accession>
<gene>
    <name evidence="1" type="primary">pyrD</name>
    <name type="ordered locus">BURPS668_1809</name>
</gene>